<reference evidence="4" key="1">
    <citation type="submission" date="2008-04" db="EMBL/GenBank/DDBJ databases">
        <authorList>
            <consortium name="NIH - Zebrafish Gene Collection (ZGC) project"/>
        </authorList>
    </citation>
    <scope>NUCLEOTIDE SEQUENCE [LARGE SCALE MRNA]</scope>
</reference>
<proteinExistence type="evidence at transcript level"/>
<name>PCF5A_DANRE</name>
<organism>
    <name type="scientific">Danio rerio</name>
    <name type="common">Zebrafish</name>
    <name type="synonym">Brachydanio rerio</name>
    <dbReference type="NCBI Taxonomy" id="7955"/>
    <lineage>
        <taxon>Eukaryota</taxon>
        <taxon>Metazoa</taxon>
        <taxon>Chordata</taxon>
        <taxon>Craniata</taxon>
        <taxon>Vertebrata</taxon>
        <taxon>Euteleostomi</taxon>
        <taxon>Actinopterygii</taxon>
        <taxon>Neopterygii</taxon>
        <taxon>Teleostei</taxon>
        <taxon>Ostariophysi</taxon>
        <taxon>Cypriniformes</taxon>
        <taxon>Danionidae</taxon>
        <taxon>Danioninae</taxon>
        <taxon>Danio</taxon>
    </lineage>
</organism>
<accession>B3DK16</accession>
<protein>
    <recommendedName>
        <fullName evidence="5">Polycomb group RING finger protein 5-A</fullName>
    </recommendedName>
</protein>
<evidence type="ECO:0000250" key="1"/>
<evidence type="ECO:0000255" key="2">
    <source>
        <dbReference type="PROSITE-ProRule" id="PRU00175"/>
    </source>
</evidence>
<evidence type="ECO:0000256" key="3">
    <source>
        <dbReference type="SAM" id="MobiDB-lite"/>
    </source>
</evidence>
<evidence type="ECO:0000312" key="4">
    <source>
        <dbReference type="EMBL" id="AAI63687.1"/>
    </source>
</evidence>
<evidence type="ECO:0000312" key="5">
    <source>
        <dbReference type="ZFIN" id="ZDB-GENE-080723-33"/>
    </source>
</evidence>
<dbReference type="EMBL" id="BC163687">
    <property type="protein sequence ID" value="AAI63687.1"/>
    <property type="molecule type" value="mRNA"/>
</dbReference>
<dbReference type="EMBL" id="BC163702">
    <property type="protein sequence ID" value="AAI63702.1"/>
    <property type="molecule type" value="mRNA"/>
</dbReference>
<dbReference type="RefSeq" id="NP_001122184.1">
    <property type="nucleotide sequence ID" value="NM_001128712.1"/>
</dbReference>
<dbReference type="RefSeq" id="XP_017207149.1">
    <property type="nucleotide sequence ID" value="XM_017351660.1"/>
</dbReference>
<dbReference type="SMR" id="B3DK16"/>
<dbReference type="FunCoup" id="B3DK16">
    <property type="interactions" value="764"/>
</dbReference>
<dbReference type="STRING" id="7955.ENSDARP00000095486"/>
<dbReference type="PaxDb" id="7955-ENSDARP00000095486"/>
<dbReference type="Ensembl" id="ENSDART00000104715">
    <property type="protein sequence ID" value="ENSDARP00000095486"/>
    <property type="gene ID" value="ENSDARG00000071007"/>
</dbReference>
<dbReference type="Ensembl" id="ENSDART00000187479">
    <property type="protein sequence ID" value="ENSDARP00000157176"/>
    <property type="gene ID" value="ENSDARG00000113711"/>
</dbReference>
<dbReference type="Ensembl" id="ENSDART00000193365">
    <property type="protein sequence ID" value="ENSDARP00000146800"/>
    <property type="gene ID" value="ENSDARG00000114273"/>
</dbReference>
<dbReference type="GeneID" id="562327"/>
<dbReference type="KEGG" id="dre:562327"/>
<dbReference type="AGR" id="ZFIN:ZDB-GENE-080723-33"/>
<dbReference type="CTD" id="562327"/>
<dbReference type="ZFIN" id="ZDB-GENE-080723-33">
    <property type="gene designation" value="pcgf5a"/>
</dbReference>
<dbReference type="eggNOG" id="KOG2660">
    <property type="taxonomic scope" value="Eukaryota"/>
</dbReference>
<dbReference type="HOGENOM" id="CLU_046427_4_1_1"/>
<dbReference type="InParanoid" id="B3DK16"/>
<dbReference type="OMA" id="HESEFCK"/>
<dbReference type="OrthoDB" id="1305878at2759"/>
<dbReference type="PhylomeDB" id="B3DK16"/>
<dbReference type="TreeFam" id="TF324206"/>
<dbReference type="PRO" id="PR:B3DK16"/>
<dbReference type="Proteomes" id="UP000000437">
    <property type="component" value="Alternate scaffold 17"/>
</dbReference>
<dbReference type="Proteomes" id="UP000000437">
    <property type="component" value="Chromosome 17"/>
</dbReference>
<dbReference type="Bgee" id="ENSDARG00000071007">
    <property type="expression patterns" value="Expressed in muscle tissue and 17 other cell types or tissues"/>
</dbReference>
<dbReference type="GO" id="GO:0031519">
    <property type="term" value="C:PcG protein complex"/>
    <property type="evidence" value="ECO:0000250"/>
    <property type="project" value="UniProtKB"/>
</dbReference>
<dbReference type="GO" id="GO:0035102">
    <property type="term" value="C:PRC1 complex"/>
    <property type="evidence" value="ECO:0000318"/>
    <property type="project" value="GO_Central"/>
</dbReference>
<dbReference type="GO" id="GO:0008270">
    <property type="term" value="F:zinc ion binding"/>
    <property type="evidence" value="ECO:0007669"/>
    <property type="project" value="UniProtKB-KW"/>
</dbReference>
<dbReference type="GO" id="GO:0007399">
    <property type="term" value="P:nervous system development"/>
    <property type="evidence" value="ECO:0000315"/>
    <property type="project" value="ZFIN"/>
</dbReference>
<dbReference type="GO" id="GO:0006357">
    <property type="term" value="P:regulation of transcription by RNA polymerase II"/>
    <property type="evidence" value="ECO:0000318"/>
    <property type="project" value="GO_Central"/>
</dbReference>
<dbReference type="CDD" id="cd17084">
    <property type="entry name" value="RAWUL_PCGF5"/>
    <property type="match status" value="1"/>
</dbReference>
<dbReference type="CDD" id="cd16737">
    <property type="entry name" value="RING-HC_PCGF5"/>
    <property type="match status" value="1"/>
</dbReference>
<dbReference type="FunFam" id="3.10.20.90:FF:000242">
    <property type="entry name" value="Putative polycomb group RING finger protein 5"/>
    <property type="match status" value="1"/>
</dbReference>
<dbReference type="FunFam" id="3.30.40.10:FF:000118">
    <property type="entry name" value="Putative polycomb group RING finger protein 5"/>
    <property type="match status" value="1"/>
</dbReference>
<dbReference type="Gene3D" id="3.10.20.90">
    <property type="entry name" value="Phosphatidylinositol 3-kinase Catalytic Subunit, Chain A, domain 1"/>
    <property type="match status" value="1"/>
</dbReference>
<dbReference type="Gene3D" id="3.30.40.10">
    <property type="entry name" value="Zinc/RING finger domain, C3HC4 (zinc finger)"/>
    <property type="match status" value="1"/>
</dbReference>
<dbReference type="InterPro" id="IPR051507">
    <property type="entry name" value="PcG_RING_finger"/>
</dbReference>
<dbReference type="InterPro" id="IPR032443">
    <property type="entry name" value="RAWUL"/>
</dbReference>
<dbReference type="InterPro" id="IPR001841">
    <property type="entry name" value="Znf_RING"/>
</dbReference>
<dbReference type="InterPro" id="IPR013083">
    <property type="entry name" value="Znf_RING/FYVE/PHD"/>
</dbReference>
<dbReference type="InterPro" id="IPR017907">
    <property type="entry name" value="Znf_RING_CS"/>
</dbReference>
<dbReference type="PANTHER" id="PTHR45893">
    <property type="entry name" value="POLYCOMB GROUP RING FINGER PROTEIN"/>
    <property type="match status" value="1"/>
</dbReference>
<dbReference type="Pfam" id="PF16207">
    <property type="entry name" value="RAWUL"/>
    <property type="match status" value="1"/>
</dbReference>
<dbReference type="Pfam" id="PF13923">
    <property type="entry name" value="zf-C3HC4_2"/>
    <property type="match status" value="1"/>
</dbReference>
<dbReference type="SMART" id="SM00184">
    <property type="entry name" value="RING"/>
    <property type="match status" value="1"/>
</dbReference>
<dbReference type="SUPFAM" id="SSF57850">
    <property type="entry name" value="RING/U-box"/>
    <property type="match status" value="1"/>
</dbReference>
<dbReference type="PROSITE" id="PS00518">
    <property type="entry name" value="ZF_RING_1"/>
    <property type="match status" value="1"/>
</dbReference>
<dbReference type="PROSITE" id="PS50089">
    <property type="entry name" value="ZF_RING_2"/>
    <property type="match status" value="1"/>
</dbReference>
<gene>
    <name evidence="5" type="primary">pcgf5a</name>
    <name type="ORF">zgc:194668</name>
</gene>
<sequence length="234" mass="27030">MATHRKHLVRDFNRYITCSICRGYLIKPTAVTECLHTFCKSCIVQHFEESNECPECGIQVHETNPLEMLRLDKTLEEIIFKLVPGLREKEEHQESEFWRKHKIKSNGEDGPRAKKSRLSGEDDDGNGGDYHRSDPQIAICLDCLRNNGQSGESIVKGLMKKFIRCSTRVTVGTIKKFLCVKLKLPSSYELDVLCNGEIMGKDHTLEFIYRTRWRLQGDSAYPMVLEYRPRIDFG</sequence>
<keyword id="KW-0479">Metal-binding</keyword>
<keyword id="KW-0539">Nucleus</keyword>
<keyword id="KW-1185">Reference proteome</keyword>
<keyword id="KW-0678">Repressor</keyword>
<keyword id="KW-0804">Transcription</keyword>
<keyword id="KW-0805">Transcription regulation</keyword>
<keyword id="KW-0862">Zinc</keyword>
<keyword id="KW-0863">Zinc-finger</keyword>
<comment type="function">
    <text evidence="1">Component of Polycomb group (PcG) multiprotein complexes; the complex class is required to maintain the transcriptionally repressive state of some genes.</text>
</comment>
<comment type="subunit">
    <text evidence="1">Component of a PRC1-like complex.</text>
</comment>
<comment type="subcellular location">
    <subcellularLocation>
        <location evidence="1">Nucleus</location>
    </subcellularLocation>
</comment>
<feature type="chain" id="PRO_0000397917" description="Polycomb group RING finger protein 5-A">
    <location>
        <begin position="1"/>
        <end position="234"/>
    </location>
</feature>
<feature type="zinc finger region" description="RING-type" evidence="2">
    <location>
        <begin position="18"/>
        <end position="57"/>
    </location>
</feature>
<feature type="region of interest" description="Disordered" evidence="3">
    <location>
        <begin position="97"/>
        <end position="130"/>
    </location>
</feature>